<organism>
    <name type="scientific">Rattus norvegicus</name>
    <name type="common">Rat</name>
    <dbReference type="NCBI Taxonomy" id="10116"/>
    <lineage>
        <taxon>Eukaryota</taxon>
        <taxon>Metazoa</taxon>
        <taxon>Chordata</taxon>
        <taxon>Craniata</taxon>
        <taxon>Vertebrata</taxon>
        <taxon>Euteleostomi</taxon>
        <taxon>Mammalia</taxon>
        <taxon>Eutheria</taxon>
        <taxon>Euarchontoglires</taxon>
        <taxon>Glires</taxon>
        <taxon>Rodentia</taxon>
        <taxon>Myomorpha</taxon>
        <taxon>Muroidea</taxon>
        <taxon>Muridae</taxon>
        <taxon>Murinae</taxon>
        <taxon>Rattus</taxon>
    </lineage>
</organism>
<sequence length="140" mass="15343">MTVGARLRSKASSLVGRGPLGRLRRAGDEETDAIVEHLEGEDEDPESQDCEREEDGRRAGTPSARRVHLAALPERYDSLEEPAPGDKPKKRYRRKLKKYGKNVGKAISKGCRYIVIGLQGFAAAYSAPFGVATSVVSFVR</sequence>
<accession>Q3ZCQ0</accession>
<comment type="function">
    <text evidence="1">Regulates drug efflux through modulation of ABCB1 localization and activity.</text>
</comment>
<comment type="subcellular location">
    <subcellularLocation>
        <location evidence="4">Membrane</location>
        <topology evidence="2">Single-pass membrane protein</topology>
    </subcellularLocation>
</comment>
<comment type="sequence caution" evidence="4">
    <conflict type="erroneous initiation">
        <sequence resource="EMBL-CDS" id="AAI00158"/>
    </conflict>
    <text>Extended N-terminus.</text>
</comment>
<protein>
    <recommendedName>
        <fullName>Required for drug-induced death protein 1</fullName>
    </recommendedName>
</protein>
<feature type="chain" id="PRO_0000265075" description="Required for drug-induced death protein 1">
    <location>
        <begin position="1"/>
        <end position="140"/>
    </location>
</feature>
<feature type="transmembrane region" description="Helical" evidence="2">
    <location>
        <begin position="118"/>
        <end position="140"/>
    </location>
</feature>
<feature type="region of interest" description="Disordered" evidence="3">
    <location>
        <begin position="1"/>
        <end position="95"/>
    </location>
</feature>
<feature type="compositionally biased region" description="Acidic residues" evidence="3">
    <location>
        <begin position="29"/>
        <end position="53"/>
    </location>
</feature>
<proteinExistence type="evidence at transcript level"/>
<name>RDD1_RAT</name>
<reference key="1">
    <citation type="journal article" date="2004" name="Genome Res.">
        <title>The status, quality, and expansion of the NIH full-length cDNA project: the Mammalian Gene Collection (MGC).</title>
        <authorList>
            <consortium name="The MGC Project Team"/>
        </authorList>
    </citation>
    <scope>NUCLEOTIDE SEQUENCE [LARGE SCALE MRNA]</scope>
    <source>
        <tissue>Lung</tissue>
    </source>
</reference>
<evidence type="ECO:0000250" key="1">
    <source>
        <dbReference type="UniProtKB" id="Q9H7X2"/>
    </source>
</evidence>
<evidence type="ECO:0000255" key="2"/>
<evidence type="ECO:0000256" key="3">
    <source>
        <dbReference type="SAM" id="MobiDB-lite"/>
    </source>
</evidence>
<evidence type="ECO:0000305" key="4"/>
<dbReference type="EMBL" id="BC100157">
    <property type="protein sequence ID" value="AAI00158.1"/>
    <property type="status" value="ALT_INIT"/>
    <property type="molecule type" value="mRNA"/>
</dbReference>
<dbReference type="RefSeq" id="NP_001094327.1">
    <property type="nucleotide sequence ID" value="NM_001100857.1"/>
</dbReference>
<dbReference type="STRING" id="10116.ENSRNOP00000003177"/>
<dbReference type="PhosphoSitePlus" id="Q3ZCQ0"/>
<dbReference type="PaxDb" id="10116-ENSRNOP00000003177"/>
<dbReference type="GeneID" id="360894"/>
<dbReference type="KEGG" id="rno:360894"/>
<dbReference type="UCSC" id="RGD:1310587">
    <property type="organism name" value="rat"/>
</dbReference>
<dbReference type="AGR" id="RGD:1310587"/>
<dbReference type="CTD" id="360894"/>
<dbReference type="RGD" id="1310587">
    <property type="gene designation" value="C13h1orf115"/>
</dbReference>
<dbReference type="VEuPathDB" id="HostDB:ENSRNOG00000002322"/>
<dbReference type="eggNOG" id="ENOG502S8G4">
    <property type="taxonomic scope" value="Eukaryota"/>
</dbReference>
<dbReference type="HOGENOM" id="CLU_116334_0_0_1"/>
<dbReference type="InParanoid" id="Q3ZCQ0"/>
<dbReference type="OrthoDB" id="87593at9989"/>
<dbReference type="PhylomeDB" id="Q3ZCQ0"/>
<dbReference type="TreeFam" id="TF338404"/>
<dbReference type="PRO" id="PR:Q3ZCQ0"/>
<dbReference type="Proteomes" id="UP000002494">
    <property type="component" value="Chromosome 13"/>
</dbReference>
<dbReference type="Bgee" id="ENSRNOG00000002322">
    <property type="expression patterns" value="Expressed in liver and 18 other cell types or tissues"/>
</dbReference>
<dbReference type="GO" id="GO:0097731">
    <property type="term" value="C:9+0 non-motile cilium"/>
    <property type="evidence" value="ECO:0000266"/>
    <property type="project" value="RGD"/>
</dbReference>
<dbReference type="GO" id="GO:0016020">
    <property type="term" value="C:membrane"/>
    <property type="evidence" value="ECO:0007669"/>
    <property type="project" value="UniProtKB-SubCell"/>
</dbReference>
<dbReference type="GO" id="GO:2001023">
    <property type="term" value="P:regulation of response to drug"/>
    <property type="evidence" value="ECO:0000266"/>
    <property type="project" value="RGD"/>
</dbReference>
<dbReference type="InterPro" id="IPR031667">
    <property type="entry name" value="RDD1"/>
</dbReference>
<dbReference type="PANTHER" id="PTHR14680:SF1">
    <property type="entry name" value="REQUIRED FOR DRUG-INDUCED DEATH PROTEIN 1"/>
    <property type="match status" value="1"/>
</dbReference>
<dbReference type="PANTHER" id="PTHR14680">
    <property type="entry name" value="SI:DKEY-126G1.9-RELATED"/>
    <property type="match status" value="1"/>
</dbReference>
<dbReference type="Pfam" id="PF15828">
    <property type="entry name" value="RDD1"/>
    <property type="match status" value="1"/>
</dbReference>
<keyword id="KW-0472">Membrane</keyword>
<keyword id="KW-1185">Reference proteome</keyword>
<keyword id="KW-0812">Transmembrane</keyword>
<keyword id="KW-1133">Transmembrane helix</keyword>